<sequence>MAEAFIQVLLDNLTSFLKGELVLLFGFQDEFQRLSSMFSTIQAVLEDAQEKQLNNKPLENWLQKLNAATYEVDDILDEYKTKATRFSQSEYGRYHPKVIPFRHKVGKRMDQVMKKLKAIAEERKNFHLHEKIVERQAVRRETGSVLTEPQVYGRDKEKDEIVKILINNVSDAQHLSVLPILGMGGLGKTTLAQMVFNDQRVTEHFHSKIWICVSEDFDEKRLIKAIVESIEGRPLLGEMDLAPLQKKLQELLNGKRYLLVLDDVWNEDQQKWANLRAVLKVGASGASVLTTTRLEKVGSIMGTLQPYELSNLSQEDCWLLFMQRAFGHQEEINPNLVAIGKEIVKKSGGVPLAAKTLGGILCFKREERAWEHVRDSPIWNLPQDESSILPALRLSYHQLPLDLKQCFAYCAVFPKDAKMEKEKLISLWMAHGFLLSKGNMELEDVGDEVWKELYLRSFFQEIEVKDGKTYFKMHDLIHDLATSLFSANTSSSNIREINKHSYTHMMSIGFAEVVFFYTLPPLEKFISLRVLNLGDSTFNKLPSSIGDLVHLRYLNLYGSGMRSLPKQLCKLQNLQTLDLQYCTKLCCLPKETSKLGSLRNLLLDGSQSLTCMPPRIGSLTCLKTLGQFVVGRKKGYQLGELGNLNLYGSIKISHLERVKNDKDAKEANLSAKGNLHSLSMSWNNFGPHIYESEEVKVLEALKPHSNLTSLKIYGFRGIHLPEWMNHSVLKNIVSILISNFRNCSCLPPFGDLPCLESLELHWGSADVEYVEEVDIDVHSGFPTRIRFPSLRKLDIWDFGSLKGLLKKEGEEQFPVLEEMIIHECPFLTLSSNLRALTSLRICYNKVATSFPEEMFKNLANLKYLTISRCNNLKELPTSLASLNALKSLKIQLCCALESLPEEGLEGLSSLTELFVEHCNMLKCLPEGLQHLTTLTSLKIRGCPQLIKRCEKGIGEDWHKISHIPNVNIYI</sequence>
<reference key="1">
    <citation type="journal article" date="2003" name="Proc. Natl. Acad. Sci. U.S.A.">
        <title>Gene RB cloned from Solanum bulbocastanum confers broad spectrum resistance to potato late blight.</title>
        <authorList>
            <person name="Song J."/>
            <person name="Bradeen J.M."/>
            <person name="Naess S.K."/>
            <person name="Raasch J.A."/>
            <person name="Wielgus S.M."/>
            <person name="Haberlach G.T."/>
            <person name="Liu J."/>
            <person name="Kuang H."/>
            <person name="Austin-Phillips S."/>
            <person name="Buell C.R."/>
            <person name="Helgeson J.P."/>
            <person name="Jiang J."/>
        </authorList>
    </citation>
    <scope>NUCLEOTIDE SEQUENCE [GENOMIC DNA]</scope>
    <scope>VARIANTS</scope>
</reference>
<reference key="2">
    <citation type="journal article" date="2003" name="Plant J.">
        <title>An ancient R gene from the wild potato species Solanum bulbocastanum confers broad-spectrum resistance to Phytophthora infestans in cultivated potato and tomato.</title>
        <authorList>
            <person name="van der Vossen E."/>
            <person name="Sikkema A."/>
            <person name="Hekkert Bt B.L."/>
            <person name="Gros J."/>
            <person name="Stevens P."/>
            <person name="Muskens M."/>
            <person name="Wouters D."/>
            <person name="Pereira A."/>
            <person name="Stiekema W."/>
            <person name="Allefs S."/>
        </authorList>
    </citation>
    <scope>NUCLEOTIDE SEQUENCE [GENOMIC DNA]</scope>
</reference>
<comment type="function">
    <text>Disease resistance protein. Resistance proteins guard the plant against pathogens that contain an appropriate avirulence protein via a direct or indirect interaction with this avirulence protein. That triggers a defense system which restricts the pathogen growth. Confers a broad resistance to all known races of P.infestans.</text>
</comment>
<comment type="induction">
    <text>Constitutively expressed.</text>
</comment>
<comment type="biotechnology">
    <text>Can be introduced into cultivated potato (S.tuberosum) or tomato (L.esculentum) to transfer a broad-spectrum late blight resistance to cultivated Solanaceae from sexually incompatible host species.</text>
</comment>
<comment type="miscellaneous">
    <text>Belongs to a four-gene family located at the same locus. Although the four genes are expressed in the resistant haplotype, only RGA2 confers the resistance to P.infestans. In the susceptible haplotype, RGA1 and RGA3 are likely to be pseudogenes created by deletions and mutations, while RGA2 also contains several modifications.</text>
</comment>
<comment type="similarity">
    <text evidence="2">Belongs to the disease resistance NB-LRR family.</text>
</comment>
<comment type="sequence caution" evidence="2">
    <conflict type="erroneous gene model prediction">
        <sequence resource="EMBL-CDS" id="AAP45164"/>
    </conflict>
</comment>
<comment type="sequence caution" evidence="2">
    <conflict type="erroneous gene model prediction">
        <sequence resource="EMBL-CDS" id="AAP45188"/>
    </conflict>
</comment>
<organism>
    <name type="scientific">Solanum bulbocastanum</name>
    <name type="common">Wild potato</name>
    <dbReference type="NCBI Taxonomy" id="147425"/>
    <lineage>
        <taxon>Eukaryota</taxon>
        <taxon>Viridiplantae</taxon>
        <taxon>Streptophyta</taxon>
        <taxon>Embryophyta</taxon>
        <taxon>Tracheophyta</taxon>
        <taxon>Spermatophyta</taxon>
        <taxon>Magnoliopsida</taxon>
        <taxon>eudicotyledons</taxon>
        <taxon>Gunneridae</taxon>
        <taxon>Pentapetalae</taxon>
        <taxon>asterids</taxon>
        <taxon>lamiids</taxon>
        <taxon>Solanales</taxon>
        <taxon>Solanaceae</taxon>
        <taxon>Solanoideae</taxon>
        <taxon>Solaneae</taxon>
        <taxon>Solanum</taxon>
    </lineage>
</organism>
<protein>
    <recommendedName>
        <fullName>Disease resistance protein RGA2</fullName>
    </recommendedName>
    <alternativeName>
        <fullName>Blight resistance protein RPI</fullName>
    </alternativeName>
    <alternativeName>
        <fullName>RGA2-blb</fullName>
    </alternativeName>
</protein>
<accession>Q7XBQ9</accession>
<accession>Q7XA18</accession>
<accession>Q7XA41</accession>
<feature type="chain" id="PRO_0000212778" description="Disease resistance protein RGA2">
    <location>
        <begin position="1"/>
        <end position="970"/>
    </location>
</feature>
<feature type="domain" description="NB-ARC">
    <location>
        <begin position="135"/>
        <end position="438"/>
    </location>
</feature>
<feature type="repeat" description="LRR 1">
    <location>
        <begin position="525"/>
        <end position="548"/>
    </location>
</feature>
<feature type="repeat" description="LRR 2">
    <location>
        <begin position="550"/>
        <end position="571"/>
    </location>
</feature>
<feature type="repeat" description="LRR 3">
    <location>
        <begin position="573"/>
        <end position="594"/>
    </location>
</feature>
<feature type="repeat" description="LRR 4">
    <location>
        <begin position="595"/>
        <end position="619"/>
    </location>
</feature>
<feature type="repeat" description="LRR 5">
    <location>
        <begin position="638"/>
        <end position="662"/>
    </location>
</feature>
<feature type="repeat" description="LRR 6">
    <location>
        <begin position="672"/>
        <end position="697"/>
    </location>
</feature>
<feature type="repeat" description="LRR 7">
    <location>
        <begin position="752"/>
        <end position="777"/>
    </location>
</feature>
<feature type="repeat" description="LRR 8">
    <location>
        <begin position="787"/>
        <end position="811"/>
    </location>
</feature>
<feature type="repeat" description="LRR 9">
    <location>
        <begin position="813"/>
        <end position="832"/>
    </location>
</feature>
<feature type="repeat" description="LRR 10">
    <location>
        <begin position="833"/>
        <end position="857"/>
    </location>
</feature>
<feature type="repeat" description="LRR 11">
    <location>
        <begin position="859"/>
        <end position="882"/>
    </location>
</feature>
<feature type="repeat" description="LRR 12">
    <location>
        <begin position="884"/>
        <end position="906"/>
    </location>
</feature>
<feature type="repeat" description="LRR 13">
    <location>
        <begin position="907"/>
        <end position="931"/>
    </location>
</feature>
<feature type="repeat" description="LRR 14">
    <location>
        <begin position="946"/>
        <end position="970"/>
    </location>
</feature>
<feature type="binding site" evidence="1">
    <location>
        <begin position="182"/>
        <end position="189"/>
    </location>
    <ligand>
        <name>ATP</name>
        <dbReference type="ChEBI" id="CHEBI:30616"/>
    </ligand>
</feature>
<feature type="sequence variant" description="In susceptible haplotype.">
    <original>V</original>
    <variation>A</variation>
    <location>
        <position position="22"/>
    </location>
</feature>
<feature type="sequence variant" description="In susceptible haplotype.">
    <location>
        <begin position="449"/>
        <end position="540"/>
    </location>
</feature>
<feature type="sequence variant" description="In susceptible haplotype.">
    <location>
        <begin position="889"/>
        <end position="894"/>
    </location>
</feature>
<evidence type="ECO:0000255" key="1"/>
<evidence type="ECO:0000305" key="2"/>
<gene>
    <name type="primary">RGA2</name>
    <name type="synonym">177O13.40</name>
    <name type="synonym">CB3A14.5</name>
    <name type="synonym">RB</name>
    <name type="synonym">RPI-BLB1</name>
</gene>
<keyword id="KW-0067">ATP-binding</keyword>
<keyword id="KW-0433">Leucine-rich repeat</keyword>
<keyword id="KW-0547">Nucleotide-binding</keyword>
<keyword id="KW-0611">Plant defense</keyword>
<keyword id="KW-0677">Repeat</keyword>
<dbReference type="EMBL" id="AY336128">
    <property type="protein sequence ID" value="AAP86601.1"/>
    <property type="molecule type" value="Genomic_DNA"/>
</dbReference>
<dbReference type="EMBL" id="AY303170">
    <property type="protein sequence ID" value="AAP45164.2"/>
    <property type="status" value="ALT_SEQ"/>
    <property type="molecule type" value="Genomic_DNA"/>
</dbReference>
<dbReference type="EMBL" id="AY303171">
    <property type="protein sequence ID" value="AAP45188.2"/>
    <property type="status" value="ALT_SEQ"/>
    <property type="molecule type" value="Genomic_DNA"/>
</dbReference>
<dbReference type="EMBL" id="AY426259">
    <property type="protein sequence ID" value="AAR29069.1"/>
    <property type="molecule type" value="Genomic_DNA"/>
</dbReference>
<dbReference type="SMR" id="Q7XBQ9"/>
<dbReference type="GO" id="GO:0043531">
    <property type="term" value="F:ADP binding"/>
    <property type="evidence" value="ECO:0007669"/>
    <property type="project" value="InterPro"/>
</dbReference>
<dbReference type="GO" id="GO:0005524">
    <property type="term" value="F:ATP binding"/>
    <property type="evidence" value="ECO:0007669"/>
    <property type="project" value="UniProtKB-KW"/>
</dbReference>
<dbReference type="GO" id="GO:0098542">
    <property type="term" value="P:defense response to other organism"/>
    <property type="evidence" value="ECO:0007669"/>
    <property type="project" value="UniProtKB-ARBA"/>
</dbReference>
<dbReference type="CDD" id="cd14798">
    <property type="entry name" value="RX-CC_like"/>
    <property type="match status" value="1"/>
</dbReference>
<dbReference type="FunFam" id="3.40.50.300:FF:001091">
    <property type="entry name" value="Probable disease resistance protein At1g61300"/>
    <property type="match status" value="1"/>
</dbReference>
<dbReference type="FunFam" id="1.10.10.10:FF:000322">
    <property type="entry name" value="Probable disease resistance protein At1g63360"/>
    <property type="match status" value="1"/>
</dbReference>
<dbReference type="Gene3D" id="1.20.5.4130">
    <property type="match status" value="1"/>
</dbReference>
<dbReference type="Gene3D" id="1.10.8.430">
    <property type="entry name" value="Helical domain of apoptotic protease-activating factors"/>
    <property type="match status" value="1"/>
</dbReference>
<dbReference type="Gene3D" id="3.40.50.300">
    <property type="entry name" value="P-loop containing nucleotide triphosphate hydrolases"/>
    <property type="match status" value="1"/>
</dbReference>
<dbReference type="Gene3D" id="3.80.10.10">
    <property type="entry name" value="Ribonuclease Inhibitor"/>
    <property type="match status" value="2"/>
</dbReference>
<dbReference type="Gene3D" id="1.10.10.10">
    <property type="entry name" value="Winged helix-like DNA-binding domain superfamily/Winged helix DNA-binding domain"/>
    <property type="match status" value="1"/>
</dbReference>
<dbReference type="InterPro" id="IPR042197">
    <property type="entry name" value="Apaf_helical"/>
</dbReference>
<dbReference type="InterPro" id="IPR001611">
    <property type="entry name" value="Leu-rich_rpt"/>
</dbReference>
<dbReference type="InterPro" id="IPR032675">
    <property type="entry name" value="LRR_dom_sf"/>
</dbReference>
<dbReference type="InterPro" id="IPR056789">
    <property type="entry name" value="LRR_R13L1-DRL21"/>
</dbReference>
<dbReference type="InterPro" id="IPR002182">
    <property type="entry name" value="NB-ARC"/>
</dbReference>
<dbReference type="InterPro" id="IPR027417">
    <property type="entry name" value="P-loop_NTPase"/>
</dbReference>
<dbReference type="InterPro" id="IPR038005">
    <property type="entry name" value="RX-like_CC"/>
</dbReference>
<dbReference type="InterPro" id="IPR041118">
    <property type="entry name" value="Rx_N"/>
</dbReference>
<dbReference type="InterPro" id="IPR036388">
    <property type="entry name" value="WH-like_DNA-bd_sf"/>
</dbReference>
<dbReference type="PANTHER" id="PTHR36766:SF42">
    <property type="entry name" value="NB-ARC DOMAIN DISEASE RESISTANCE PROTEIN"/>
    <property type="match status" value="1"/>
</dbReference>
<dbReference type="PANTHER" id="PTHR36766">
    <property type="entry name" value="PLANT BROAD-SPECTRUM MILDEW RESISTANCE PROTEIN RPW8"/>
    <property type="match status" value="1"/>
</dbReference>
<dbReference type="Pfam" id="PF13855">
    <property type="entry name" value="LRR_8"/>
    <property type="match status" value="1"/>
</dbReference>
<dbReference type="Pfam" id="PF25019">
    <property type="entry name" value="LRR_R13L1-DRL21"/>
    <property type="match status" value="1"/>
</dbReference>
<dbReference type="Pfam" id="PF00931">
    <property type="entry name" value="NB-ARC"/>
    <property type="match status" value="1"/>
</dbReference>
<dbReference type="Pfam" id="PF18052">
    <property type="entry name" value="Rx_N"/>
    <property type="match status" value="1"/>
</dbReference>
<dbReference type="Pfam" id="PF23559">
    <property type="entry name" value="WH_DRP"/>
    <property type="match status" value="1"/>
</dbReference>
<dbReference type="PRINTS" id="PR00364">
    <property type="entry name" value="DISEASERSIST"/>
</dbReference>
<dbReference type="SUPFAM" id="SSF52058">
    <property type="entry name" value="L domain-like"/>
    <property type="match status" value="1"/>
</dbReference>
<dbReference type="SUPFAM" id="SSF52540">
    <property type="entry name" value="P-loop containing nucleoside triphosphate hydrolases"/>
    <property type="match status" value="1"/>
</dbReference>
<dbReference type="SUPFAM" id="SSF52047">
    <property type="entry name" value="RNI-like"/>
    <property type="match status" value="1"/>
</dbReference>
<proteinExistence type="evidence at protein level"/>
<name>RGA2_SOLBU</name>